<dbReference type="EC" id="6.1.1.27" evidence="1"/>
<dbReference type="EMBL" id="CP000867">
    <property type="protein sequence ID" value="ABX01018.1"/>
    <property type="molecule type" value="Genomic_DNA"/>
</dbReference>
<dbReference type="SMR" id="A9A794"/>
<dbReference type="STRING" id="444158.MmarC6_0196"/>
<dbReference type="KEGG" id="mmx:MmarC6_0196"/>
<dbReference type="eggNOG" id="arCOG00411">
    <property type="taxonomic scope" value="Archaea"/>
</dbReference>
<dbReference type="HOGENOM" id="CLU_506822_0_0_2"/>
<dbReference type="OrthoDB" id="145125at2157"/>
<dbReference type="PhylomeDB" id="A9A794"/>
<dbReference type="GO" id="GO:0005524">
    <property type="term" value="F:ATP binding"/>
    <property type="evidence" value="ECO:0007669"/>
    <property type="project" value="UniProtKB-UniRule"/>
</dbReference>
<dbReference type="GO" id="GO:0043816">
    <property type="term" value="F:phosphoserine-tRNA(Cys) ligase activity"/>
    <property type="evidence" value="ECO:0007669"/>
    <property type="project" value="UniProtKB-EC"/>
</dbReference>
<dbReference type="GO" id="GO:0000049">
    <property type="term" value="F:tRNA binding"/>
    <property type="evidence" value="ECO:0007669"/>
    <property type="project" value="InterPro"/>
</dbReference>
<dbReference type="GO" id="GO:0006412">
    <property type="term" value="P:translation"/>
    <property type="evidence" value="ECO:0007669"/>
    <property type="project" value="UniProtKB-KW"/>
</dbReference>
<dbReference type="GO" id="GO:0043039">
    <property type="term" value="P:tRNA aminoacylation"/>
    <property type="evidence" value="ECO:0007669"/>
    <property type="project" value="UniProtKB-UniRule"/>
</dbReference>
<dbReference type="Gene3D" id="6.10.250.3340">
    <property type="match status" value="3"/>
</dbReference>
<dbReference type="Gene3D" id="6.20.250.20">
    <property type="match status" value="1"/>
</dbReference>
<dbReference type="Gene3D" id="3.30.930.10">
    <property type="entry name" value="Bira Bifunctional Protein, Domain 2"/>
    <property type="match status" value="1"/>
</dbReference>
<dbReference type="HAMAP" id="MF_01674">
    <property type="entry name" value="Sep_tRNA_synth"/>
    <property type="match status" value="1"/>
</dbReference>
<dbReference type="InterPro" id="IPR006195">
    <property type="entry name" value="aa-tRNA-synth_II"/>
</dbReference>
<dbReference type="InterPro" id="IPR045864">
    <property type="entry name" value="aa-tRNA-synth_II/BPL/LPL"/>
</dbReference>
<dbReference type="InterPro" id="IPR005246">
    <property type="entry name" value="O-Pseryl-tRNA(Cys)_ligase"/>
</dbReference>
<dbReference type="InterPro" id="IPR002319">
    <property type="entry name" value="Phenylalanyl-tRNA_Synthase"/>
</dbReference>
<dbReference type="InterPro" id="IPR041590">
    <property type="entry name" value="SepRS_C"/>
</dbReference>
<dbReference type="NCBIfam" id="TIGR00470">
    <property type="entry name" value="sepS"/>
    <property type="match status" value="1"/>
</dbReference>
<dbReference type="Pfam" id="PF18006">
    <property type="entry name" value="SepRS_C"/>
    <property type="match status" value="1"/>
</dbReference>
<dbReference type="Pfam" id="PF01409">
    <property type="entry name" value="tRNA-synt_2d"/>
    <property type="match status" value="1"/>
</dbReference>
<dbReference type="SUPFAM" id="SSF55681">
    <property type="entry name" value="Class II aaRS and biotin synthetases"/>
    <property type="match status" value="1"/>
</dbReference>
<dbReference type="PROSITE" id="PS50862">
    <property type="entry name" value="AA_TRNA_LIGASE_II"/>
    <property type="match status" value="1"/>
</dbReference>
<keyword id="KW-0030">Aminoacyl-tRNA synthetase</keyword>
<keyword id="KW-0067">ATP-binding</keyword>
<keyword id="KW-0436">Ligase</keyword>
<keyword id="KW-0547">Nucleotide-binding</keyword>
<keyword id="KW-0648">Protein biosynthesis</keyword>
<proteinExistence type="inferred from homology"/>
<feature type="chain" id="PRO_0000363752" description="O-phosphoserine--tRNA(Cys) ligase">
    <location>
        <begin position="1"/>
        <end position="537"/>
    </location>
</feature>
<feature type="binding site" evidence="1">
    <location>
        <begin position="186"/>
        <end position="188"/>
    </location>
    <ligand>
        <name>substrate</name>
    </ligand>
</feature>
<feature type="binding site" evidence="1">
    <location>
        <begin position="231"/>
        <end position="233"/>
    </location>
    <ligand>
        <name>substrate</name>
    </ligand>
</feature>
<feature type="binding site" evidence="1">
    <location>
        <begin position="273"/>
        <end position="274"/>
    </location>
    <ligand>
        <name>substrate</name>
    </ligand>
</feature>
<feature type="binding site" evidence="1">
    <location>
        <position position="317"/>
    </location>
    <ligand>
        <name>substrate</name>
    </ligand>
</feature>
<accession>A9A794</accession>
<reference key="1">
    <citation type="submission" date="2007-10" db="EMBL/GenBank/DDBJ databases">
        <title>Complete sequence of Methanococcus maripaludis C6.</title>
        <authorList>
            <consortium name="US DOE Joint Genome Institute"/>
            <person name="Copeland A."/>
            <person name="Lucas S."/>
            <person name="Lapidus A."/>
            <person name="Barry K."/>
            <person name="Glavina del Rio T."/>
            <person name="Dalin E."/>
            <person name="Tice H."/>
            <person name="Pitluck S."/>
            <person name="Clum A."/>
            <person name="Schmutz J."/>
            <person name="Larimer F."/>
            <person name="Land M."/>
            <person name="Hauser L."/>
            <person name="Kyrpides N."/>
            <person name="Mikhailova N."/>
            <person name="Sieprawska-Lupa M."/>
            <person name="Whitman W.B."/>
            <person name="Richardson P."/>
        </authorList>
    </citation>
    <scope>NUCLEOTIDE SEQUENCE [LARGE SCALE GENOMIC DNA]</scope>
    <source>
        <strain>C6 / ATCC BAA-1332</strain>
    </source>
</reference>
<comment type="function">
    <text evidence="1">Catalyzes the attachment of O-phosphoserine (Sep) to tRNA(Cys).</text>
</comment>
<comment type="catalytic activity">
    <reaction evidence="1">
        <text>tRNA(Cys) + O-phospho-L-serine + ATP = O-phospho-L-seryl-tRNA(Cys) + AMP + diphosphate</text>
        <dbReference type="Rhea" id="RHEA:25678"/>
        <dbReference type="Rhea" id="RHEA-COMP:9661"/>
        <dbReference type="Rhea" id="RHEA-COMP:9719"/>
        <dbReference type="ChEBI" id="CHEBI:30616"/>
        <dbReference type="ChEBI" id="CHEBI:33019"/>
        <dbReference type="ChEBI" id="CHEBI:57524"/>
        <dbReference type="ChEBI" id="CHEBI:78442"/>
        <dbReference type="ChEBI" id="CHEBI:78551"/>
        <dbReference type="ChEBI" id="CHEBI:456215"/>
        <dbReference type="EC" id="6.1.1.27"/>
    </reaction>
</comment>
<comment type="subunit">
    <text evidence="1">Homotetramer. Interacts with SepCysS.</text>
</comment>
<comment type="similarity">
    <text evidence="1">Belongs to the class-II aminoacyl-tRNA synthetase family. O-phosphoseryl-tRNA(Cys) synthetase subfamily.</text>
</comment>
<organism>
    <name type="scientific">Methanococcus maripaludis (strain C6 / ATCC BAA-1332)</name>
    <dbReference type="NCBI Taxonomy" id="444158"/>
    <lineage>
        <taxon>Archaea</taxon>
        <taxon>Methanobacteriati</taxon>
        <taxon>Methanobacteriota</taxon>
        <taxon>Methanomada group</taxon>
        <taxon>Methanococci</taxon>
        <taxon>Methanococcales</taxon>
        <taxon>Methanococcaceae</taxon>
        <taxon>Methanococcus</taxon>
    </lineage>
</organism>
<protein>
    <recommendedName>
        <fullName evidence="1">O-phosphoserine--tRNA(Cys) ligase</fullName>
        <shortName evidence="1">O-phosphoserine--tRNA ligase</shortName>
        <ecNumber evidence="1">6.1.1.27</ecNumber>
    </recommendedName>
    <alternativeName>
        <fullName evidence="1">Non-canonical O-phosphoseryl-tRNA(Cys) synthetase</fullName>
    </alternativeName>
    <alternativeName>
        <fullName evidence="1">O-phosphoseryl-tRNA(Cys) synthetase</fullName>
        <shortName evidence="1">SepRS</shortName>
    </alternativeName>
</protein>
<name>SEPS_METM6</name>
<gene>
    <name evidence="1" type="primary">sepS</name>
    <name type="ordered locus">MmarC6_0196</name>
</gene>
<evidence type="ECO:0000255" key="1">
    <source>
        <dbReference type="HAMAP-Rule" id="MF_01674"/>
    </source>
</evidence>
<sequence>MFKREEIIEMANKDFEKAWIETKDLIKAKKVNESYPRIKPVFGKTHPVNDTIENLRQAYLRMGFEEYINPVIVDERDIYKQFGPEAMAVLDRCFYLAGLPRPDVGLSDEKISQIEKLGIKVSEHKESLQKILHGYKKGTLDGDDLVLEISNALEISSEMGLKILEEVFPEFKDLTAVSSKLTLRSHMTSGWFLTVSDLMNKKPLPFKLFSIDRCFRREQKEDKSHLMTYHSASCAIAGESVDINDGKAIAEGLLSQFGFTNFKFIPDEKKSKYYTPETQTEVYAYHPKLKEWLEVATFGVYSPVALSKYGIDVPVMNLGLGVERLAMISGNFADVREMVYPQFYEHRLDDRDVASMVKLDKVPVMDEIYDLTKELIDLCVKNKDLKSPCELKLEKTFAFGKTKKNVKISIFEKEEGKNLLGPSILNEIYMYDGNVIGIPESFDGVKEEFKDFLEKGKTEGVSTGIRYIDALCFKITSKLEESFVSNTSEFKVKVPIVRSLSDINLKIDDIALKQIMSKNKVIDVRGPVFLNVEVKIE</sequence>